<comment type="function">
    <text evidence="1">Nucleoside triphosphate pyrophosphatase that hydrolyzes 7-methyl-GTP (m(7)GTP). May have a dual role in cell division arrest and in preventing the incorporation of modified nucleotides into cellular nucleic acids.</text>
</comment>
<comment type="catalytic activity">
    <reaction evidence="1">
        <text>N(7)-methyl-GTP + H2O = N(7)-methyl-GMP + diphosphate + H(+)</text>
        <dbReference type="Rhea" id="RHEA:58744"/>
        <dbReference type="ChEBI" id="CHEBI:15377"/>
        <dbReference type="ChEBI" id="CHEBI:15378"/>
        <dbReference type="ChEBI" id="CHEBI:33019"/>
        <dbReference type="ChEBI" id="CHEBI:58285"/>
        <dbReference type="ChEBI" id="CHEBI:87133"/>
    </reaction>
</comment>
<comment type="cofactor">
    <cofactor evidence="1">
        <name>a divalent metal cation</name>
        <dbReference type="ChEBI" id="CHEBI:60240"/>
    </cofactor>
</comment>
<comment type="subcellular location">
    <subcellularLocation>
        <location evidence="1">Cytoplasm</location>
    </subcellularLocation>
</comment>
<comment type="similarity">
    <text evidence="1">Belongs to the Maf family. YceF subfamily.</text>
</comment>
<comment type="sequence caution" evidence="2">
    <conflict type="erroneous initiation">
        <sequence resource="EMBL-CDS" id="ABA48863"/>
    </conflict>
</comment>
<protein>
    <recommendedName>
        <fullName evidence="1">7-methyl-GTP pyrophosphatase</fullName>
        <shortName evidence="1">m(7)GTP pyrophosphatase</shortName>
        <ecNumber evidence="1">3.6.1.-</ecNumber>
    </recommendedName>
</protein>
<dbReference type="EC" id="3.6.1.-" evidence="1"/>
<dbReference type="EMBL" id="CP000124">
    <property type="protein sequence ID" value="ABA48863.1"/>
    <property type="status" value="ALT_INIT"/>
    <property type="molecule type" value="Genomic_DNA"/>
</dbReference>
<dbReference type="RefSeq" id="WP_004192535.1">
    <property type="nucleotide sequence ID" value="NC_007434.1"/>
</dbReference>
<dbReference type="SMR" id="Q3JQ61"/>
<dbReference type="EnsemblBacteria" id="ABA48863">
    <property type="protein sequence ID" value="ABA48863"/>
    <property type="gene ID" value="BURPS1710b_2911"/>
</dbReference>
<dbReference type="KEGG" id="bpm:BURPS1710b_2911"/>
<dbReference type="HOGENOM" id="CLU_040416_1_0_4"/>
<dbReference type="Proteomes" id="UP000002700">
    <property type="component" value="Chromosome I"/>
</dbReference>
<dbReference type="GO" id="GO:0005737">
    <property type="term" value="C:cytoplasm"/>
    <property type="evidence" value="ECO:0007669"/>
    <property type="project" value="UniProtKB-SubCell"/>
</dbReference>
<dbReference type="GO" id="GO:0047429">
    <property type="term" value="F:nucleoside triphosphate diphosphatase activity"/>
    <property type="evidence" value="ECO:0007669"/>
    <property type="project" value="InterPro"/>
</dbReference>
<dbReference type="GO" id="GO:0009117">
    <property type="term" value="P:nucleotide metabolic process"/>
    <property type="evidence" value="ECO:0007669"/>
    <property type="project" value="UniProtKB-KW"/>
</dbReference>
<dbReference type="CDD" id="cd00555">
    <property type="entry name" value="Maf"/>
    <property type="match status" value="1"/>
</dbReference>
<dbReference type="Gene3D" id="3.90.950.10">
    <property type="match status" value="1"/>
</dbReference>
<dbReference type="HAMAP" id="MF_00528">
    <property type="entry name" value="Maf"/>
    <property type="match status" value="1"/>
</dbReference>
<dbReference type="InterPro" id="IPR029001">
    <property type="entry name" value="ITPase-like_fam"/>
</dbReference>
<dbReference type="InterPro" id="IPR003697">
    <property type="entry name" value="Maf-like"/>
</dbReference>
<dbReference type="NCBIfam" id="TIGR00172">
    <property type="entry name" value="maf"/>
    <property type="match status" value="1"/>
</dbReference>
<dbReference type="PANTHER" id="PTHR43213">
    <property type="entry name" value="BIFUNCTIONAL DTTP/UTP PYROPHOSPHATASE/METHYLTRANSFERASE PROTEIN-RELATED"/>
    <property type="match status" value="1"/>
</dbReference>
<dbReference type="PANTHER" id="PTHR43213:SF5">
    <property type="entry name" value="BIFUNCTIONAL DTTP_UTP PYROPHOSPHATASE_METHYLTRANSFERASE PROTEIN-RELATED"/>
    <property type="match status" value="1"/>
</dbReference>
<dbReference type="Pfam" id="PF02545">
    <property type="entry name" value="Maf"/>
    <property type="match status" value="1"/>
</dbReference>
<dbReference type="PIRSF" id="PIRSF006305">
    <property type="entry name" value="Maf"/>
    <property type="match status" value="1"/>
</dbReference>
<dbReference type="SUPFAM" id="SSF52972">
    <property type="entry name" value="ITPase-like"/>
    <property type="match status" value="1"/>
</dbReference>
<organism>
    <name type="scientific">Burkholderia pseudomallei (strain 1710b)</name>
    <dbReference type="NCBI Taxonomy" id="320372"/>
    <lineage>
        <taxon>Bacteria</taxon>
        <taxon>Pseudomonadati</taxon>
        <taxon>Pseudomonadota</taxon>
        <taxon>Betaproteobacteria</taxon>
        <taxon>Burkholderiales</taxon>
        <taxon>Burkholderiaceae</taxon>
        <taxon>Burkholderia</taxon>
        <taxon>pseudomallei group</taxon>
    </lineage>
</organism>
<proteinExistence type="inferred from homology"/>
<evidence type="ECO:0000255" key="1">
    <source>
        <dbReference type="HAMAP-Rule" id="MF_00528"/>
    </source>
</evidence>
<evidence type="ECO:0000305" key="2"/>
<keyword id="KW-0963">Cytoplasm</keyword>
<keyword id="KW-0378">Hydrolase</keyword>
<keyword id="KW-0546">Nucleotide metabolism</keyword>
<accession>Q3JQ61</accession>
<reference key="1">
    <citation type="journal article" date="2010" name="Genome Biol. Evol.">
        <title>Continuing evolution of Burkholderia mallei through genome reduction and large-scale rearrangements.</title>
        <authorList>
            <person name="Losada L."/>
            <person name="Ronning C.M."/>
            <person name="DeShazer D."/>
            <person name="Woods D."/>
            <person name="Fedorova N."/>
            <person name="Kim H.S."/>
            <person name="Shabalina S.A."/>
            <person name="Pearson T.R."/>
            <person name="Brinkac L."/>
            <person name="Tan P."/>
            <person name="Nandi T."/>
            <person name="Crabtree J."/>
            <person name="Badger J."/>
            <person name="Beckstrom-Sternberg S."/>
            <person name="Saqib M."/>
            <person name="Schutzer S.E."/>
            <person name="Keim P."/>
            <person name="Nierman W.C."/>
        </authorList>
    </citation>
    <scope>NUCLEOTIDE SEQUENCE [LARGE SCALE GENOMIC DNA]</scope>
    <source>
        <strain>1710b</strain>
    </source>
</reference>
<feature type="chain" id="PRO_0000267270" description="7-methyl-GTP pyrophosphatase">
    <location>
        <begin position="1"/>
        <end position="215"/>
    </location>
</feature>
<feature type="active site" description="Proton acceptor" evidence="1">
    <location>
        <position position="79"/>
    </location>
</feature>
<feature type="site" description="Important for substrate specificity" evidence="1">
    <location>
        <position position="19"/>
    </location>
</feature>
<feature type="site" description="Important for substrate specificity" evidence="1">
    <location>
        <position position="80"/>
    </location>
</feature>
<feature type="site" description="Important for substrate specificity" evidence="1">
    <location>
        <position position="164"/>
    </location>
</feature>
<name>NTPPB_BURP1</name>
<sequence>MQHHACSPPRLILASSSRYRRELLERLRVPFDVVAPEIDETPLPDETPCATALRLAAAKARAAAERARAPHGALVIGSDQVATFDGLQIGKPGTHARALAQLQAMRGRDVEFHSALCLYDSRSGATQSEDIVTRVRFRTLTDVELDAYLRAETPYDVAGSAKSEGLGIALLDAIDSDDPTALVGLPLIALTRMLRAAGYPLFGAPAPAADGVNGR</sequence>
<gene>
    <name type="ordered locus">BURPS1710b_2911</name>
</gene>